<proteinExistence type="evidence at transcript level"/>
<name>GL84_ORYSJ</name>
<feature type="signal peptide" evidence="2">
    <location>
        <begin position="1"/>
        <end position="23"/>
    </location>
</feature>
<feature type="chain" id="PRO_0000365516" description="Germin-like protein 8-4">
    <location>
        <begin position="24"/>
        <end position="224"/>
    </location>
</feature>
<feature type="domain" description="Cupin type-1" evidence="2">
    <location>
        <begin position="70"/>
        <end position="213"/>
    </location>
</feature>
<feature type="binding site" evidence="1">
    <location>
        <position position="111"/>
    </location>
    <ligand>
        <name>Mn(2+)</name>
        <dbReference type="ChEBI" id="CHEBI:29035"/>
    </ligand>
</feature>
<feature type="binding site" evidence="1">
    <location>
        <position position="113"/>
    </location>
    <ligand>
        <name>Mn(2+)</name>
        <dbReference type="ChEBI" id="CHEBI:29035"/>
    </ligand>
</feature>
<feature type="binding site" evidence="1">
    <location>
        <position position="118"/>
    </location>
    <ligand>
        <name>Mn(2+)</name>
        <dbReference type="ChEBI" id="CHEBI:29035"/>
    </ligand>
</feature>
<feature type="binding site" evidence="1">
    <location>
        <position position="158"/>
    </location>
    <ligand>
        <name>Mn(2+)</name>
        <dbReference type="ChEBI" id="CHEBI:29035"/>
    </ligand>
</feature>
<feature type="glycosylation site" description="N-linked (GlcNAc...) asparagine" evidence="2">
    <location>
        <position position="78"/>
    </location>
</feature>
<feature type="disulfide bond" evidence="1">
    <location>
        <begin position="33"/>
        <end position="48"/>
    </location>
</feature>
<organism>
    <name type="scientific">Oryza sativa subsp. japonica</name>
    <name type="common">Rice</name>
    <dbReference type="NCBI Taxonomy" id="39947"/>
    <lineage>
        <taxon>Eukaryota</taxon>
        <taxon>Viridiplantae</taxon>
        <taxon>Streptophyta</taxon>
        <taxon>Embryophyta</taxon>
        <taxon>Tracheophyta</taxon>
        <taxon>Spermatophyta</taxon>
        <taxon>Magnoliopsida</taxon>
        <taxon>Liliopsida</taxon>
        <taxon>Poales</taxon>
        <taxon>Poaceae</taxon>
        <taxon>BOP clade</taxon>
        <taxon>Oryzoideae</taxon>
        <taxon>Oryzeae</taxon>
        <taxon>Oryzinae</taxon>
        <taxon>Oryza</taxon>
        <taxon>Oryza sativa</taxon>
    </lineage>
</organism>
<accession>Q6YZZ6</accession>
<accession>A0A0P0XCS6</accession>
<accession>O48997</accession>
<protein>
    <recommendedName>
        <fullName>Germin-like protein 8-4</fullName>
    </recommendedName>
    <alternativeName>
        <fullName>Germin-like protein 1</fullName>
        <shortName>OsGER1</shortName>
    </alternativeName>
</protein>
<gene>
    <name type="primary">GER1</name>
    <name type="ordered locus">Os08g0189300</name>
    <name type="ordered locus">LOC_Os08g08980</name>
    <name type="ORF">B1099H05.28</name>
    <name type="ORF">OsJ_025243</name>
    <name type="ORF">P0610E02.4</name>
</gene>
<comment type="function">
    <text evidence="3">Plays a role in broad-spectrum disease resistance. Probably has no oxalate oxidase activity even if the active site is conserved.</text>
</comment>
<comment type="subunit">
    <text evidence="1">Oligomer (believed to be a pentamer but probably hexamer).</text>
</comment>
<comment type="subcellular location">
    <subcellularLocation>
        <location evidence="1">Secreted</location>
        <location evidence="1">Extracellular space</location>
        <location evidence="1">Apoplast</location>
    </subcellularLocation>
</comment>
<comment type="miscellaneous">
    <text>Member of the 12 germin-like protein gene cluster located on chromosome 8 in the major-effect quantitative trait loci (QTL) for fungal blast resistance. Partial suppression of the 12 germin-like protein genes increases susceptibility to the fungal pathogens causing rice blast and sheath blight diseases.</text>
</comment>
<comment type="similarity">
    <text evidence="4">Belongs to the germin family.</text>
</comment>
<sequence length="224" mass="24574">MASSSSLYLLAALLALASWQAIAFDPSPLQDFCVADMKSPVRVNGFPCKNPMEVNSDDFFNAAKFDMPRSTMNKVGSNVTNLNVLNFPGLNTLGISLARIDYAPLGVNPPHIHPRATELLTVLEGTLYVGFVTSNPNRLFSKVVHKGDTFVFPKAMIHFQMNLDHNKPAVAQSSLNSQNPGVITIASAVFGSKPPISDDVLTKAFQVEKKVIDWLKSQFWESNY</sequence>
<dbReference type="EMBL" id="AF032971">
    <property type="protein sequence ID" value="AAC04832.1"/>
    <property type="molecule type" value="mRNA"/>
</dbReference>
<dbReference type="EMBL" id="AP005505">
    <property type="protein sequence ID" value="BAD05731.1"/>
    <property type="molecule type" value="Genomic_DNA"/>
</dbReference>
<dbReference type="EMBL" id="AP005531">
    <property type="protein sequence ID" value="BAD05770.1"/>
    <property type="molecule type" value="Genomic_DNA"/>
</dbReference>
<dbReference type="EMBL" id="AP008214">
    <property type="protein sequence ID" value="BAF23072.1"/>
    <property type="molecule type" value="Genomic_DNA"/>
</dbReference>
<dbReference type="EMBL" id="AP014964">
    <property type="protein sequence ID" value="BAT04151.1"/>
    <property type="molecule type" value="Genomic_DNA"/>
</dbReference>
<dbReference type="EMBL" id="CM000145">
    <property type="protein sequence ID" value="EAZ41760.1"/>
    <property type="molecule type" value="Genomic_DNA"/>
</dbReference>
<dbReference type="EMBL" id="AK059338">
    <property type="protein sequence ID" value="BAG86964.1"/>
    <property type="molecule type" value="mRNA"/>
</dbReference>
<dbReference type="PIR" id="T02239">
    <property type="entry name" value="T02239"/>
</dbReference>
<dbReference type="RefSeq" id="XP_015650202.1">
    <property type="nucleotide sequence ID" value="XM_015794716.1"/>
</dbReference>
<dbReference type="SMR" id="Q6YZZ6"/>
<dbReference type="FunCoup" id="Q6YZZ6">
    <property type="interactions" value="41"/>
</dbReference>
<dbReference type="STRING" id="39947.Q6YZZ6"/>
<dbReference type="GlyCosmos" id="Q6YZZ6">
    <property type="glycosylation" value="1 site, No reported glycans"/>
</dbReference>
<dbReference type="PaxDb" id="39947-Q6YZZ6"/>
<dbReference type="EnsemblPlants" id="Os08t0189300-01">
    <property type="protein sequence ID" value="Os08t0189300-01"/>
    <property type="gene ID" value="Os08g0189300"/>
</dbReference>
<dbReference type="Gramene" id="Os08t0189300-01">
    <property type="protein sequence ID" value="Os08t0189300-01"/>
    <property type="gene ID" value="Os08g0189300"/>
</dbReference>
<dbReference type="KEGG" id="dosa:Os08g0189300"/>
<dbReference type="eggNOG" id="ENOG502QQ4A">
    <property type="taxonomic scope" value="Eukaryota"/>
</dbReference>
<dbReference type="HOGENOM" id="CLU_015790_0_0_1"/>
<dbReference type="InParanoid" id="Q6YZZ6"/>
<dbReference type="OMA" id="INPYVLT"/>
<dbReference type="OrthoDB" id="1921208at2759"/>
<dbReference type="Proteomes" id="UP000000763">
    <property type="component" value="Chromosome 8"/>
</dbReference>
<dbReference type="Proteomes" id="UP000007752">
    <property type="component" value="Chromosome 8"/>
</dbReference>
<dbReference type="Proteomes" id="UP000059680">
    <property type="component" value="Chromosome 8"/>
</dbReference>
<dbReference type="GO" id="GO:0048046">
    <property type="term" value="C:apoplast"/>
    <property type="evidence" value="ECO:0007669"/>
    <property type="project" value="UniProtKB-SubCell"/>
</dbReference>
<dbReference type="GO" id="GO:0030145">
    <property type="term" value="F:manganese ion binding"/>
    <property type="evidence" value="ECO:0007669"/>
    <property type="project" value="InterPro"/>
</dbReference>
<dbReference type="CDD" id="cd02241">
    <property type="entry name" value="cupin_OxOx"/>
    <property type="match status" value="1"/>
</dbReference>
<dbReference type="FunFam" id="2.60.120.10:FF:000005">
    <property type="entry name" value="Germin-like protein subfamily 1 member 8"/>
    <property type="match status" value="1"/>
</dbReference>
<dbReference type="Gene3D" id="2.60.120.10">
    <property type="entry name" value="Jelly Rolls"/>
    <property type="match status" value="1"/>
</dbReference>
<dbReference type="InterPro" id="IPR006045">
    <property type="entry name" value="Cupin_1"/>
</dbReference>
<dbReference type="InterPro" id="IPR001929">
    <property type="entry name" value="Germin"/>
</dbReference>
<dbReference type="InterPro" id="IPR019780">
    <property type="entry name" value="Germin_Mn-BS"/>
</dbReference>
<dbReference type="InterPro" id="IPR014710">
    <property type="entry name" value="RmlC-like_jellyroll"/>
</dbReference>
<dbReference type="InterPro" id="IPR011051">
    <property type="entry name" value="RmlC_Cupin_sf"/>
</dbReference>
<dbReference type="PANTHER" id="PTHR31238">
    <property type="entry name" value="GERMIN-LIKE PROTEIN SUBFAMILY 3 MEMBER 3"/>
    <property type="match status" value="1"/>
</dbReference>
<dbReference type="Pfam" id="PF00190">
    <property type="entry name" value="Cupin_1"/>
    <property type="match status" value="1"/>
</dbReference>
<dbReference type="PRINTS" id="PR00325">
    <property type="entry name" value="GERMIN"/>
</dbReference>
<dbReference type="SMART" id="SM00835">
    <property type="entry name" value="Cupin_1"/>
    <property type="match status" value="1"/>
</dbReference>
<dbReference type="SUPFAM" id="SSF51182">
    <property type="entry name" value="RmlC-like cupins"/>
    <property type="match status" value="1"/>
</dbReference>
<dbReference type="PROSITE" id="PS00725">
    <property type="entry name" value="GERMIN"/>
    <property type="match status" value="1"/>
</dbReference>
<keyword id="KW-0052">Apoplast</keyword>
<keyword id="KW-1015">Disulfide bond</keyword>
<keyword id="KW-0325">Glycoprotein</keyword>
<keyword id="KW-0464">Manganese</keyword>
<keyword id="KW-0479">Metal-binding</keyword>
<keyword id="KW-1185">Reference proteome</keyword>
<keyword id="KW-0964">Secreted</keyword>
<keyword id="KW-0732">Signal</keyword>
<evidence type="ECO:0000250" key="1"/>
<evidence type="ECO:0000255" key="2"/>
<evidence type="ECO:0000269" key="3">
    <source>
    </source>
</evidence>
<evidence type="ECO:0000305" key="4"/>
<reference key="1">
    <citation type="online journal article" date="1998" name="Plant Gene Register">
        <title>The rice genome expresses at least six different genes for oxalate oxidase/germin-like proteins.</title>
        <authorList>
            <person name="Membre N."/>
            <person name="Bernier F."/>
        </authorList>
        <locator>PGR98-021</locator>
    </citation>
    <scope>NUCLEOTIDE SEQUENCE [MRNA]</scope>
    <source>
        <strain>cv. Nipponbare</strain>
    </source>
</reference>
<reference key="2">
    <citation type="journal article" date="2005" name="Nature">
        <title>The map-based sequence of the rice genome.</title>
        <authorList>
            <consortium name="International rice genome sequencing project (IRGSP)"/>
        </authorList>
    </citation>
    <scope>NUCLEOTIDE SEQUENCE [LARGE SCALE GENOMIC DNA]</scope>
    <source>
        <strain>cv. Nipponbare</strain>
    </source>
</reference>
<reference key="3">
    <citation type="journal article" date="2008" name="Nucleic Acids Res.">
        <title>The rice annotation project database (RAP-DB): 2008 update.</title>
        <authorList>
            <consortium name="The rice annotation project (RAP)"/>
        </authorList>
    </citation>
    <scope>GENOME REANNOTATION</scope>
    <source>
        <strain>cv. Nipponbare</strain>
    </source>
</reference>
<reference key="4">
    <citation type="journal article" date="2013" name="Rice">
        <title>Improvement of the Oryza sativa Nipponbare reference genome using next generation sequence and optical map data.</title>
        <authorList>
            <person name="Kawahara Y."/>
            <person name="de la Bastide M."/>
            <person name="Hamilton J.P."/>
            <person name="Kanamori H."/>
            <person name="McCombie W.R."/>
            <person name="Ouyang S."/>
            <person name="Schwartz D.C."/>
            <person name="Tanaka T."/>
            <person name="Wu J."/>
            <person name="Zhou S."/>
            <person name="Childs K.L."/>
            <person name="Davidson R.M."/>
            <person name="Lin H."/>
            <person name="Quesada-Ocampo L."/>
            <person name="Vaillancourt B."/>
            <person name="Sakai H."/>
            <person name="Lee S.S."/>
            <person name="Kim J."/>
            <person name="Numa H."/>
            <person name="Itoh T."/>
            <person name="Buell C.R."/>
            <person name="Matsumoto T."/>
        </authorList>
    </citation>
    <scope>GENOME REANNOTATION</scope>
    <source>
        <strain>cv. Nipponbare</strain>
    </source>
</reference>
<reference key="5">
    <citation type="journal article" date="2005" name="PLoS Biol.">
        <title>The genomes of Oryza sativa: a history of duplications.</title>
        <authorList>
            <person name="Yu J."/>
            <person name="Wang J."/>
            <person name="Lin W."/>
            <person name="Li S."/>
            <person name="Li H."/>
            <person name="Zhou J."/>
            <person name="Ni P."/>
            <person name="Dong W."/>
            <person name="Hu S."/>
            <person name="Zeng C."/>
            <person name="Zhang J."/>
            <person name="Zhang Y."/>
            <person name="Li R."/>
            <person name="Xu Z."/>
            <person name="Li S."/>
            <person name="Li X."/>
            <person name="Zheng H."/>
            <person name="Cong L."/>
            <person name="Lin L."/>
            <person name="Yin J."/>
            <person name="Geng J."/>
            <person name="Li G."/>
            <person name="Shi J."/>
            <person name="Liu J."/>
            <person name="Lv H."/>
            <person name="Li J."/>
            <person name="Wang J."/>
            <person name="Deng Y."/>
            <person name="Ran L."/>
            <person name="Shi X."/>
            <person name="Wang X."/>
            <person name="Wu Q."/>
            <person name="Li C."/>
            <person name="Ren X."/>
            <person name="Wang J."/>
            <person name="Wang X."/>
            <person name="Li D."/>
            <person name="Liu D."/>
            <person name="Zhang X."/>
            <person name="Ji Z."/>
            <person name="Zhao W."/>
            <person name="Sun Y."/>
            <person name="Zhang Z."/>
            <person name="Bao J."/>
            <person name="Han Y."/>
            <person name="Dong L."/>
            <person name="Ji J."/>
            <person name="Chen P."/>
            <person name="Wu S."/>
            <person name="Liu J."/>
            <person name="Xiao Y."/>
            <person name="Bu D."/>
            <person name="Tan J."/>
            <person name="Yang L."/>
            <person name="Ye C."/>
            <person name="Zhang J."/>
            <person name="Xu J."/>
            <person name="Zhou Y."/>
            <person name="Yu Y."/>
            <person name="Zhang B."/>
            <person name="Zhuang S."/>
            <person name="Wei H."/>
            <person name="Liu B."/>
            <person name="Lei M."/>
            <person name="Yu H."/>
            <person name="Li Y."/>
            <person name="Xu H."/>
            <person name="Wei S."/>
            <person name="He X."/>
            <person name="Fang L."/>
            <person name="Zhang Z."/>
            <person name="Zhang Y."/>
            <person name="Huang X."/>
            <person name="Su Z."/>
            <person name="Tong W."/>
            <person name="Li J."/>
            <person name="Tong Z."/>
            <person name="Li S."/>
            <person name="Ye J."/>
            <person name="Wang L."/>
            <person name="Fang L."/>
            <person name="Lei T."/>
            <person name="Chen C.-S."/>
            <person name="Chen H.-C."/>
            <person name="Xu Z."/>
            <person name="Li H."/>
            <person name="Huang H."/>
            <person name="Zhang F."/>
            <person name="Xu H."/>
            <person name="Li N."/>
            <person name="Zhao C."/>
            <person name="Li S."/>
            <person name="Dong L."/>
            <person name="Huang Y."/>
            <person name="Li L."/>
            <person name="Xi Y."/>
            <person name="Qi Q."/>
            <person name="Li W."/>
            <person name="Zhang B."/>
            <person name="Hu W."/>
            <person name="Zhang Y."/>
            <person name="Tian X."/>
            <person name="Jiao Y."/>
            <person name="Liang X."/>
            <person name="Jin J."/>
            <person name="Gao L."/>
            <person name="Zheng W."/>
            <person name="Hao B."/>
            <person name="Liu S.-M."/>
            <person name="Wang W."/>
            <person name="Yuan L."/>
            <person name="Cao M."/>
            <person name="McDermott J."/>
            <person name="Samudrala R."/>
            <person name="Wang J."/>
            <person name="Wong G.K.-S."/>
            <person name="Yang H."/>
        </authorList>
    </citation>
    <scope>NUCLEOTIDE SEQUENCE [LARGE SCALE GENOMIC DNA]</scope>
    <source>
        <strain>cv. Nipponbare</strain>
    </source>
</reference>
<reference key="6">
    <citation type="journal article" date="2003" name="Science">
        <title>Collection, mapping, and annotation of over 28,000 cDNA clones from japonica rice.</title>
        <authorList>
            <consortium name="The rice full-length cDNA consortium"/>
        </authorList>
    </citation>
    <scope>NUCLEOTIDE SEQUENCE [LARGE SCALE MRNA]</scope>
    <source>
        <strain>cv. Nipponbare</strain>
    </source>
</reference>
<reference key="7">
    <citation type="journal article" date="2009" name="Plant Physiol.">
        <title>A germin-like protein gene family functions as a complex quantitative trait locus conferring broad-spectrum disease resistance in rice.</title>
        <authorList>
            <person name="Manosalva P.M."/>
            <person name="Davidson R.M."/>
            <person name="Liu B."/>
            <person name="Zhu X."/>
            <person name="Hulbert S.H."/>
            <person name="Leung H."/>
            <person name="Leach J.E."/>
        </authorList>
    </citation>
    <scope>FUNCTION</scope>
</reference>